<keyword id="KW-0119">Carbohydrate metabolism</keyword>
<keyword id="KW-0903">Direct protein sequencing</keyword>
<keyword id="KW-0326">Glycosidase</keyword>
<keyword id="KW-0378">Hydrolase</keyword>
<keyword id="KW-0624">Polysaccharide degradation</keyword>
<keyword id="KW-0677">Repeat</keyword>
<keyword id="KW-0732">Signal</keyword>
<keyword id="KW-0858">Xylan degradation</keyword>
<feature type="signal peptide" evidence="5">
    <location>
        <begin position="1"/>
        <end position="33"/>
    </location>
</feature>
<feature type="chain" id="PRO_0000007980" description="Endo-1,4-beta-xylanase A">
    <location>
        <begin position="34"/>
        <end position="1157"/>
    </location>
</feature>
<feature type="domain" description="CBM-cenC 1">
    <location>
        <begin position="38"/>
        <end position="189"/>
    </location>
</feature>
<feature type="domain" description="CBM-cenC 2">
    <location>
        <begin position="195"/>
        <end position="343"/>
    </location>
</feature>
<feature type="domain" description="GH10" evidence="3">
    <location>
        <begin position="352"/>
        <end position="675"/>
    </location>
</feature>
<feature type="domain" description="SLH 1" evidence="2">
    <location>
        <begin position="1051"/>
        <end position="1114"/>
    </location>
</feature>
<feature type="domain" description="SLH 2" evidence="2">
    <location>
        <begin position="1115"/>
        <end position="1157"/>
    </location>
</feature>
<feature type="active site" description="Proton donor" evidence="1">
    <location>
        <position position="495"/>
    </location>
</feature>
<feature type="active site" evidence="6">
    <location>
        <position position="537"/>
    </location>
</feature>
<feature type="active site" description="Nucleophile" evidence="4 6">
    <location>
        <position position="600"/>
    </location>
</feature>
<feature type="mutagenesis site" description="Loss of activity." evidence="6">
    <original>D</original>
    <variation>N</variation>
    <location>
        <position position="537"/>
    </location>
</feature>
<feature type="mutagenesis site" description="Loss of activity." evidence="6">
    <original>E</original>
    <variation>Q</variation>
    <location>
        <position position="600"/>
    </location>
</feature>
<feature type="mutagenesis site" description="Loss of activity." evidence="6">
    <original>D</original>
    <variation>N</variation>
    <location>
        <position position="602"/>
    </location>
</feature>
<evidence type="ECO:0000250" key="1"/>
<evidence type="ECO:0000255" key="2">
    <source>
        <dbReference type="PROSITE-ProRule" id="PRU00777"/>
    </source>
</evidence>
<evidence type="ECO:0000255" key="3">
    <source>
        <dbReference type="PROSITE-ProRule" id="PRU01096"/>
    </source>
</evidence>
<evidence type="ECO:0000255" key="4">
    <source>
        <dbReference type="PROSITE-ProRule" id="PRU10061"/>
    </source>
</evidence>
<evidence type="ECO:0000269" key="5">
    <source>
    </source>
</evidence>
<evidence type="ECO:0000269" key="6">
    <source>
    </source>
</evidence>
<evidence type="ECO:0000305" key="7"/>
<reference key="1">
    <citation type="journal article" date="1993" name="Appl. Environ. Microbiol.">
        <title>Gene cloning, sequencing, and biochemical characterization of endoxylanase from Thermoanaerobacterium saccharolyticum B6A-RI.</title>
        <authorList>
            <person name="Lee Y.-E."/>
            <person name="Lowe S.E."/>
            <person name="Zeikus J.G."/>
        </authorList>
    </citation>
    <scope>NUCLEOTIDE SEQUENCE [GENOMIC DNA]</scope>
    <scope>PROTEIN SEQUENCE OF 34-41</scope>
    <source>
        <strain>ATCC 49915 / DSM 7060 / B6A-RI</strain>
    </source>
</reference>
<reference key="2">
    <citation type="journal article" date="1993" name="J. Bacteriol.">
        <title>Characterization of the active site and thermostability regions of endoxylanase from Thermoanaerobacterium saccharolyticum B6A-RI.</title>
        <authorList>
            <person name="Lee Y.-E."/>
            <person name="Lowe S.E."/>
            <person name="Henrissat B."/>
            <person name="Zeikus J.G."/>
        </authorList>
    </citation>
    <scope>ACTIVE SITE</scope>
    <scope>MUTAGENESIS</scope>
</reference>
<accession>P36917</accession>
<proteinExistence type="evidence at protein level"/>
<dbReference type="EC" id="3.2.1.8"/>
<dbReference type="EMBL" id="M97882">
    <property type="protein sequence ID" value="AAA21812.1"/>
    <property type="status" value="ALT_SEQ"/>
    <property type="molecule type" value="Genomic_DNA"/>
</dbReference>
<dbReference type="PIR" id="A48490">
    <property type="entry name" value="A48490"/>
</dbReference>
<dbReference type="SMR" id="P36917"/>
<dbReference type="CAZy" id="CBM22">
    <property type="family name" value="Carbohydrate-Binding Module Family 22"/>
</dbReference>
<dbReference type="CAZy" id="CBM9">
    <property type="family name" value="Carbohydrate-Binding Module Family 9"/>
</dbReference>
<dbReference type="CAZy" id="GH10">
    <property type="family name" value="Glycoside Hydrolase Family 10"/>
</dbReference>
<dbReference type="UniPathway" id="UPA00114"/>
<dbReference type="GO" id="GO:0030246">
    <property type="term" value="F:carbohydrate binding"/>
    <property type="evidence" value="ECO:0007669"/>
    <property type="project" value="InterPro"/>
</dbReference>
<dbReference type="GO" id="GO:0031176">
    <property type="term" value="F:endo-1,4-beta-xylanase activity"/>
    <property type="evidence" value="ECO:0007669"/>
    <property type="project" value="UniProtKB-EC"/>
</dbReference>
<dbReference type="GO" id="GO:0045493">
    <property type="term" value="P:xylan catabolic process"/>
    <property type="evidence" value="ECO:0007669"/>
    <property type="project" value="UniProtKB-UniPathway"/>
</dbReference>
<dbReference type="CDD" id="cd00005">
    <property type="entry name" value="CBM9_like_1"/>
    <property type="match status" value="1"/>
</dbReference>
<dbReference type="Gene3D" id="2.60.40.1190">
    <property type="match status" value="2"/>
</dbReference>
<dbReference type="Gene3D" id="2.60.120.260">
    <property type="entry name" value="Galactose-binding domain-like"/>
    <property type="match status" value="2"/>
</dbReference>
<dbReference type="Gene3D" id="3.20.20.80">
    <property type="entry name" value="Glycosidases"/>
    <property type="match status" value="1"/>
</dbReference>
<dbReference type="InterPro" id="IPR010502">
    <property type="entry name" value="Carb-bd_dom_fam9"/>
</dbReference>
<dbReference type="InterPro" id="IPR003305">
    <property type="entry name" value="CenC_carb-bd"/>
</dbReference>
<dbReference type="InterPro" id="IPR008979">
    <property type="entry name" value="Galactose-bd-like_sf"/>
</dbReference>
<dbReference type="InterPro" id="IPR044846">
    <property type="entry name" value="GH10"/>
</dbReference>
<dbReference type="InterPro" id="IPR031158">
    <property type="entry name" value="GH10_AS"/>
</dbReference>
<dbReference type="InterPro" id="IPR001000">
    <property type="entry name" value="GH10_dom"/>
</dbReference>
<dbReference type="InterPro" id="IPR018087">
    <property type="entry name" value="Glyco_hydro_5_CS"/>
</dbReference>
<dbReference type="InterPro" id="IPR017853">
    <property type="entry name" value="Glycoside_hydrolase_SF"/>
</dbReference>
<dbReference type="InterPro" id="IPR001119">
    <property type="entry name" value="SLH_dom"/>
</dbReference>
<dbReference type="PANTHER" id="PTHR31490:SF88">
    <property type="entry name" value="BETA-XYLANASE"/>
    <property type="match status" value="1"/>
</dbReference>
<dbReference type="PANTHER" id="PTHR31490">
    <property type="entry name" value="GLYCOSYL HYDROLASE"/>
    <property type="match status" value="1"/>
</dbReference>
<dbReference type="Pfam" id="PF06452">
    <property type="entry name" value="CBM9_1"/>
    <property type="match status" value="2"/>
</dbReference>
<dbReference type="Pfam" id="PF02018">
    <property type="entry name" value="CBM_4_9"/>
    <property type="match status" value="2"/>
</dbReference>
<dbReference type="Pfam" id="PF00331">
    <property type="entry name" value="Glyco_hydro_10"/>
    <property type="match status" value="1"/>
</dbReference>
<dbReference type="Pfam" id="PF00395">
    <property type="entry name" value="SLH"/>
    <property type="match status" value="2"/>
</dbReference>
<dbReference type="PRINTS" id="PR00134">
    <property type="entry name" value="GLHYDRLASE10"/>
</dbReference>
<dbReference type="SMART" id="SM00633">
    <property type="entry name" value="Glyco_10"/>
    <property type="match status" value="1"/>
</dbReference>
<dbReference type="SUPFAM" id="SSF51445">
    <property type="entry name" value="(Trans)glycosidases"/>
    <property type="match status" value="1"/>
</dbReference>
<dbReference type="SUPFAM" id="SSF49344">
    <property type="entry name" value="CBD9-like"/>
    <property type="match status" value="2"/>
</dbReference>
<dbReference type="SUPFAM" id="SSF49785">
    <property type="entry name" value="Galactose-binding domain-like"/>
    <property type="match status" value="2"/>
</dbReference>
<dbReference type="PROSITE" id="PS00591">
    <property type="entry name" value="GH10_1"/>
    <property type="match status" value="1"/>
</dbReference>
<dbReference type="PROSITE" id="PS51760">
    <property type="entry name" value="GH10_2"/>
    <property type="match status" value="1"/>
</dbReference>
<dbReference type="PROSITE" id="PS00659">
    <property type="entry name" value="GLYCOSYL_HYDROL_F5"/>
    <property type="match status" value="1"/>
</dbReference>
<dbReference type="PROSITE" id="PS51272">
    <property type="entry name" value="SLH"/>
    <property type="match status" value="2"/>
</dbReference>
<protein>
    <recommendedName>
        <fullName>Endo-1,4-beta-xylanase A</fullName>
        <shortName>Xylanase A</shortName>
        <ecNumber>3.2.1.8</ecNumber>
    </recommendedName>
    <alternativeName>
        <fullName>1,4-beta-D-xylan xylanohydrolase A</fullName>
    </alternativeName>
</protein>
<gene>
    <name type="primary">xynA</name>
</gene>
<comment type="function">
    <text>Endo-acting enzyme that randomly cleaves the internal xylosidic linkages of the xylan backbone, yielding xylooligosaccharides of various lengths which are further hydrolyzed to xylose molecules by beta-xylosidase (EC 3.2.1.37). Requires at least three xylose residues for catalytic activity. Does not have activity against xylobiose.</text>
</comment>
<comment type="catalytic activity">
    <reaction>
        <text>Endohydrolysis of (1-&gt;4)-beta-D-xylosidic linkages in xylans.</text>
        <dbReference type="EC" id="3.2.1.8"/>
    </reaction>
</comment>
<comment type="biophysicochemical properties">
    <phDependence>
        <text>Optimum pH is 5.5.</text>
    </phDependence>
    <temperatureDependence>
        <text>Optimum temperature is 70 degrees Celsius.</text>
    </temperatureDependence>
</comment>
<comment type="pathway">
    <text>Glycan degradation; xylan degradation.</text>
</comment>
<comment type="induction">
    <text>By xylan and xylose.</text>
</comment>
<comment type="similarity">
    <text evidence="7">Belongs to the glycosyl hydrolase 10 (cellulase F) family.</text>
</comment>
<sequence>MMKNNVDRIVSIVTALIMIFGASLFSPPIRVFADDTNINLVSNGDFESGTIDGWIKQGNPTLAVTTEQAIGQYSMKVTGRTQTYEGPAYSFLGKMQKGESYSVSLKVRLVSGQNSSNPLITVTMFREDDNGKHYDTIVWQKQVSEDSWTTVSGTYTLDYIGTLKTLYMYVESPDPTLEYYIDDVVVTTQNPIQVGNVIANETFENGNTSGWIGTGSSVVKAVYGVAHSGDYSLLTTGRTANWNGPSYDLTGKIVPGQQYNVDFWVKFVNGNDTEQIKATVKATSDKDNYIQVNDFANVNKGEWTEIKGSFTLPVADYSGISIYVESQNPTLEFYIDDFSVIGEISNNQITIQNDIPDLYSVFKDYFPIGVAVDPSRLNDADPHAQLTAKHFNMLVAENAMKPESLQPTEGNFTFDNADKIVDYAIAHNMKMRGHTLLWHNQVPDWFFQDPSDPSKSASRDLLLQRLKTHITTVLDHFKTKYGSQNPIIGWDVVNEVLDDNGNLRNSKWLQIIGPDYIEKAFEYAHEADPSMKLFINDYNIENNGVKTQAMYDLVKKLKSEGVPIDGIGMQMHININSNIDNIKASIEKLASLGVEIQVTELDMNMNGNISNEALLKQARLYKQLFDLFKAEKQYITAVVFWGVSDDVTWLSKPNAPLLFDSKLQAKPAFWAVVDPSKAIPDIQSAKALEGSPTIGANVDSSWKLVKPLYVNTYVEGTVGATATVKSMWDTKNLYLLVQVSDNTPSNNDGIEIFVDKNDDKSTSYETDDERYTIKRDGTGSSDITKYVTSNADGYVAQLAIPIEDISPAVNDKIGFDIRINDDKGNGKIDAITVWNDYTNSQNTNTSYFGDIVLSKSAQIATAIYGTPVIDGKVDDIWNNVEPISTNTWILGSNGATATQKMMWDDKYLYVLADVTDSNLNKSSINPYEQDSVEVFVDQNNDKTTYYENDDGQYRVNYDNEQSFGGSTNSNGFKSATSLTQSGYIVEEAIPWTSITPSNGTIIGFDLQVNNADENGKRTGIVTWCDPSGNSWQDTSGFGNLLLTGKPSGALKKGVTFDDIKNSWAKDAIEVLASRHIVEGMTDTQYEPNKTVTRAEFTAMILRLLNIKEEQYSGEFSDVNSGDWYANAIEAAYKAGIIEGDGKNARPNDSITREEMTQ</sequence>
<organism>
    <name type="scientific">Thermoanaerobacterium saccharolyticum</name>
    <dbReference type="NCBI Taxonomy" id="28896"/>
    <lineage>
        <taxon>Bacteria</taxon>
        <taxon>Bacillati</taxon>
        <taxon>Bacillota</taxon>
        <taxon>Clostridia</taxon>
        <taxon>Thermoanaerobacterales</taxon>
        <taxon>Thermoanaerobacteraceae</taxon>
        <taxon>Thermoanaerobacterium</taxon>
    </lineage>
</organism>
<name>XYNA_THESA</name>